<proteinExistence type="inferred from homology"/>
<sequence length="217" mass="23305">MKFFVDSANIEEIRELQNLSLVDGVTTNPSLILKSGRNILDVIKEICTLIEGPVSAEVAATEFEIIMKEAAILAKIADNICIKLPLTLEGLKACKALAAQGLKTNLTLCFSANQALLAAKAGATFVSPFIGRLDDCGINGSELLHEIRTIYDNYGFETQILAASIRTVNHVKEAALSGADVASVPPTILKALVKHPLTDKGLQTFLDDWKKTGQNIA</sequence>
<accession>Q6FYL8</accession>
<dbReference type="EC" id="2.2.1.2" evidence="1"/>
<dbReference type="EMBL" id="BX897700">
    <property type="protein sequence ID" value="CAF26688.1"/>
    <property type="molecule type" value="Genomic_DNA"/>
</dbReference>
<dbReference type="SMR" id="Q6FYL8"/>
<dbReference type="KEGG" id="bqu:BQ12290"/>
<dbReference type="eggNOG" id="COG0176">
    <property type="taxonomic scope" value="Bacteria"/>
</dbReference>
<dbReference type="HOGENOM" id="CLU_079764_0_0_5"/>
<dbReference type="OrthoDB" id="9807051at2"/>
<dbReference type="UniPathway" id="UPA00115">
    <property type="reaction ID" value="UER00414"/>
</dbReference>
<dbReference type="Proteomes" id="UP000000597">
    <property type="component" value="Chromosome"/>
</dbReference>
<dbReference type="GO" id="GO:0005737">
    <property type="term" value="C:cytoplasm"/>
    <property type="evidence" value="ECO:0007669"/>
    <property type="project" value="UniProtKB-SubCell"/>
</dbReference>
<dbReference type="GO" id="GO:0016832">
    <property type="term" value="F:aldehyde-lyase activity"/>
    <property type="evidence" value="ECO:0007669"/>
    <property type="project" value="InterPro"/>
</dbReference>
<dbReference type="GO" id="GO:0004801">
    <property type="term" value="F:transaldolase activity"/>
    <property type="evidence" value="ECO:0007669"/>
    <property type="project" value="UniProtKB-UniRule"/>
</dbReference>
<dbReference type="GO" id="GO:0005975">
    <property type="term" value="P:carbohydrate metabolic process"/>
    <property type="evidence" value="ECO:0007669"/>
    <property type="project" value="InterPro"/>
</dbReference>
<dbReference type="GO" id="GO:0006098">
    <property type="term" value="P:pentose-phosphate shunt"/>
    <property type="evidence" value="ECO:0007669"/>
    <property type="project" value="UniProtKB-UniRule"/>
</dbReference>
<dbReference type="CDD" id="cd00956">
    <property type="entry name" value="Transaldolase_FSA"/>
    <property type="match status" value="1"/>
</dbReference>
<dbReference type="FunFam" id="3.20.20.70:FF:000018">
    <property type="entry name" value="Probable transaldolase"/>
    <property type="match status" value="1"/>
</dbReference>
<dbReference type="Gene3D" id="3.20.20.70">
    <property type="entry name" value="Aldolase class I"/>
    <property type="match status" value="1"/>
</dbReference>
<dbReference type="HAMAP" id="MF_00494">
    <property type="entry name" value="Transaldolase_3b"/>
    <property type="match status" value="1"/>
</dbReference>
<dbReference type="InterPro" id="IPR013785">
    <property type="entry name" value="Aldolase_TIM"/>
</dbReference>
<dbReference type="InterPro" id="IPR001585">
    <property type="entry name" value="TAL/FSA"/>
</dbReference>
<dbReference type="InterPro" id="IPR022999">
    <property type="entry name" value="Transaldolase_3B"/>
</dbReference>
<dbReference type="InterPro" id="IPR004731">
    <property type="entry name" value="Transaldolase_3B/F6P_aldolase"/>
</dbReference>
<dbReference type="InterPro" id="IPR018225">
    <property type="entry name" value="Transaldolase_AS"/>
</dbReference>
<dbReference type="InterPro" id="IPR033919">
    <property type="entry name" value="TSA/FSA_arc/bac"/>
</dbReference>
<dbReference type="NCBIfam" id="TIGR00875">
    <property type="entry name" value="fsa_talC_mipB"/>
    <property type="match status" value="1"/>
</dbReference>
<dbReference type="PANTHER" id="PTHR10683:SF40">
    <property type="entry name" value="FRUCTOSE-6-PHOSPHATE ALDOLASE 1-RELATED"/>
    <property type="match status" value="1"/>
</dbReference>
<dbReference type="PANTHER" id="PTHR10683">
    <property type="entry name" value="TRANSALDOLASE"/>
    <property type="match status" value="1"/>
</dbReference>
<dbReference type="Pfam" id="PF00923">
    <property type="entry name" value="TAL_FSA"/>
    <property type="match status" value="1"/>
</dbReference>
<dbReference type="SUPFAM" id="SSF51569">
    <property type="entry name" value="Aldolase"/>
    <property type="match status" value="1"/>
</dbReference>
<dbReference type="PROSITE" id="PS01054">
    <property type="entry name" value="TRANSALDOLASE_1"/>
    <property type="match status" value="1"/>
</dbReference>
<dbReference type="PROSITE" id="PS00958">
    <property type="entry name" value="TRANSALDOLASE_2"/>
    <property type="match status" value="1"/>
</dbReference>
<reference key="1">
    <citation type="journal article" date="2004" name="Proc. Natl. Acad. Sci. U.S.A.">
        <title>The louse-borne human pathogen Bartonella quintana is a genomic derivative of the zoonotic agent Bartonella henselae.</title>
        <authorList>
            <person name="Alsmark U.C.M."/>
            <person name="Frank A.C."/>
            <person name="Karlberg E.O."/>
            <person name="Legault B.-A."/>
            <person name="Ardell D.H."/>
            <person name="Canbaeck B."/>
            <person name="Eriksson A.-S."/>
            <person name="Naeslund A.K."/>
            <person name="Handley S.A."/>
            <person name="Huvet M."/>
            <person name="La Scola B."/>
            <person name="Holmberg M."/>
            <person name="Andersson S.G.E."/>
        </authorList>
    </citation>
    <scope>NUCLEOTIDE SEQUENCE [LARGE SCALE GENOMIC DNA]</scope>
    <source>
        <strain>Toulouse</strain>
    </source>
</reference>
<name>TAL_BARQU</name>
<keyword id="KW-0963">Cytoplasm</keyword>
<keyword id="KW-0570">Pentose shunt</keyword>
<keyword id="KW-0704">Schiff base</keyword>
<keyword id="KW-0808">Transferase</keyword>
<gene>
    <name evidence="1" type="primary">tal</name>
    <name type="ordered locus">BQ12290</name>
</gene>
<organism>
    <name type="scientific">Bartonella quintana (strain Toulouse)</name>
    <name type="common">Rochalimaea quintana</name>
    <dbReference type="NCBI Taxonomy" id="283165"/>
    <lineage>
        <taxon>Bacteria</taxon>
        <taxon>Pseudomonadati</taxon>
        <taxon>Pseudomonadota</taxon>
        <taxon>Alphaproteobacteria</taxon>
        <taxon>Hyphomicrobiales</taxon>
        <taxon>Bartonellaceae</taxon>
        <taxon>Bartonella</taxon>
    </lineage>
</organism>
<protein>
    <recommendedName>
        <fullName evidence="1">Probable transaldolase</fullName>
        <ecNumber evidence="1">2.2.1.2</ecNumber>
    </recommendedName>
</protein>
<comment type="function">
    <text evidence="1">Transaldolase is important for the balance of metabolites in the pentose-phosphate pathway.</text>
</comment>
<comment type="catalytic activity">
    <reaction evidence="1">
        <text>D-sedoheptulose 7-phosphate + D-glyceraldehyde 3-phosphate = D-erythrose 4-phosphate + beta-D-fructose 6-phosphate</text>
        <dbReference type="Rhea" id="RHEA:17053"/>
        <dbReference type="ChEBI" id="CHEBI:16897"/>
        <dbReference type="ChEBI" id="CHEBI:57483"/>
        <dbReference type="ChEBI" id="CHEBI:57634"/>
        <dbReference type="ChEBI" id="CHEBI:59776"/>
        <dbReference type="EC" id="2.2.1.2"/>
    </reaction>
</comment>
<comment type="pathway">
    <text evidence="1">Carbohydrate degradation; pentose phosphate pathway; D-glyceraldehyde 3-phosphate and beta-D-fructose 6-phosphate from D-ribose 5-phosphate and D-xylulose 5-phosphate (non-oxidative stage): step 2/3.</text>
</comment>
<comment type="subcellular location">
    <subcellularLocation>
        <location evidence="1">Cytoplasm</location>
    </subcellularLocation>
</comment>
<comment type="similarity">
    <text evidence="1">Belongs to the transaldolase family. Type 3B subfamily.</text>
</comment>
<evidence type="ECO:0000255" key="1">
    <source>
        <dbReference type="HAMAP-Rule" id="MF_00494"/>
    </source>
</evidence>
<feature type="chain" id="PRO_1000126282" description="Probable transaldolase">
    <location>
        <begin position="1"/>
        <end position="217"/>
    </location>
</feature>
<feature type="active site" description="Schiff-base intermediate with substrate" evidence="1">
    <location>
        <position position="83"/>
    </location>
</feature>